<keyword id="KW-0963">Cytoplasm</keyword>
<keyword id="KW-0378">Hydrolase</keyword>
<keyword id="KW-0645">Protease</keyword>
<keyword id="KW-0720">Serine protease</keyword>
<feature type="chain" id="PRO_0000179533" description="ATP-dependent Clp protease proteolytic subunit 2">
    <location>
        <begin position="1"/>
        <end position="203"/>
    </location>
</feature>
<feature type="active site" description="Nucleophile" evidence="1">
    <location>
        <position position="98"/>
    </location>
</feature>
<feature type="active site" evidence="1">
    <location>
        <position position="123"/>
    </location>
</feature>
<name>CLPP2_CHLPN</name>
<organism>
    <name type="scientific">Chlamydia pneumoniae</name>
    <name type="common">Chlamydophila pneumoniae</name>
    <dbReference type="NCBI Taxonomy" id="83558"/>
    <lineage>
        <taxon>Bacteria</taxon>
        <taxon>Pseudomonadati</taxon>
        <taxon>Chlamydiota</taxon>
        <taxon>Chlamydiia</taxon>
        <taxon>Chlamydiales</taxon>
        <taxon>Chlamydiaceae</taxon>
        <taxon>Chlamydia/Chlamydophila group</taxon>
        <taxon>Chlamydia</taxon>
    </lineage>
</organism>
<dbReference type="EC" id="3.4.21.92" evidence="1"/>
<dbReference type="EMBL" id="AE001363">
    <property type="protein sequence ID" value="AAD18985.1"/>
    <property type="molecule type" value="Genomic_DNA"/>
</dbReference>
<dbReference type="EMBL" id="AE002161">
    <property type="protein sequence ID" value="AAF38798.1"/>
    <property type="molecule type" value="Genomic_DNA"/>
</dbReference>
<dbReference type="EMBL" id="BA000008">
    <property type="protein sequence ID" value="BAA99055.1"/>
    <property type="molecule type" value="Genomic_DNA"/>
</dbReference>
<dbReference type="EMBL" id="AE009440">
    <property type="protein sequence ID" value="AAP98805.1"/>
    <property type="molecule type" value="Genomic_DNA"/>
</dbReference>
<dbReference type="PIR" id="E86596">
    <property type="entry name" value="E86596"/>
</dbReference>
<dbReference type="PIR" id="G72028">
    <property type="entry name" value="G72028"/>
</dbReference>
<dbReference type="RefSeq" id="NP_225042.1">
    <property type="nucleotide sequence ID" value="NC_000922.1"/>
</dbReference>
<dbReference type="RefSeq" id="WP_010883482.1">
    <property type="nucleotide sequence ID" value="NZ_LN847257.1"/>
</dbReference>
<dbReference type="SMR" id="Q9Z759"/>
<dbReference type="STRING" id="406984.CPK_ORF00253"/>
<dbReference type="MEROPS" id="S14.001"/>
<dbReference type="GeneID" id="45050899"/>
<dbReference type="KEGG" id="cpa:CP_1022"/>
<dbReference type="KEGG" id="cpj:clpP_2"/>
<dbReference type="KEGG" id="cpn:CPn_0847"/>
<dbReference type="KEGG" id="cpt:CpB0876"/>
<dbReference type="PATRIC" id="fig|115713.3.peg.927"/>
<dbReference type="eggNOG" id="COG0740">
    <property type="taxonomic scope" value="Bacteria"/>
</dbReference>
<dbReference type="HOGENOM" id="CLU_058707_3_3_0"/>
<dbReference type="OMA" id="RDYWMKA"/>
<dbReference type="OrthoDB" id="9802800at2"/>
<dbReference type="Proteomes" id="UP000000583">
    <property type="component" value="Chromosome"/>
</dbReference>
<dbReference type="Proteomes" id="UP000000801">
    <property type="component" value="Chromosome"/>
</dbReference>
<dbReference type="GO" id="GO:0005737">
    <property type="term" value="C:cytoplasm"/>
    <property type="evidence" value="ECO:0007669"/>
    <property type="project" value="UniProtKB-SubCell"/>
</dbReference>
<dbReference type="GO" id="GO:0009368">
    <property type="term" value="C:endopeptidase Clp complex"/>
    <property type="evidence" value="ECO:0007669"/>
    <property type="project" value="TreeGrafter"/>
</dbReference>
<dbReference type="GO" id="GO:0004176">
    <property type="term" value="F:ATP-dependent peptidase activity"/>
    <property type="evidence" value="ECO:0007669"/>
    <property type="project" value="InterPro"/>
</dbReference>
<dbReference type="GO" id="GO:0051117">
    <property type="term" value="F:ATPase binding"/>
    <property type="evidence" value="ECO:0007669"/>
    <property type="project" value="TreeGrafter"/>
</dbReference>
<dbReference type="GO" id="GO:0004252">
    <property type="term" value="F:serine-type endopeptidase activity"/>
    <property type="evidence" value="ECO:0007669"/>
    <property type="project" value="UniProtKB-UniRule"/>
</dbReference>
<dbReference type="GO" id="GO:0006515">
    <property type="term" value="P:protein quality control for misfolded or incompletely synthesized proteins"/>
    <property type="evidence" value="ECO:0007669"/>
    <property type="project" value="TreeGrafter"/>
</dbReference>
<dbReference type="CDD" id="cd07017">
    <property type="entry name" value="S14_ClpP_2"/>
    <property type="match status" value="1"/>
</dbReference>
<dbReference type="FunFam" id="3.90.226.10:FF:000001">
    <property type="entry name" value="ATP-dependent Clp protease proteolytic subunit"/>
    <property type="match status" value="1"/>
</dbReference>
<dbReference type="Gene3D" id="3.90.226.10">
    <property type="entry name" value="2-enoyl-CoA Hydratase, Chain A, domain 1"/>
    <property type="match status" value="1"/>
</dbReference>
<dbReference type="HAMAP" id="MF_00444">
    <property type="entry name" value="ClpP"/>
    <property type="match status" value="1"/>
</dbReference>
<dbReference type="InterPro" id="IPR001907">
    <property type="entry name" value="ClpP"/>
</dbReference>
<dbReference type="InterPro" id="IPR029045">
    <property type="entry name" value="ClpP/crotonase-like_dom_sf"/>
</dbReference>
<dbReference type="InterPro" id="IPR023562">
    <property type="entry name" value="ClpP/TepA"/>
</dbReference>
<dbReference type="InterPro" id="IPR033135">
    <property type="entry name" value="ClpP_His_AS"/>
</dbReference>
<dbReference type="InterPro" id="IPR018215">
    <property type="entry name" value="ClpP_Ser_AS"/>
</dbReference>
<dbReference type="NCBIfam" id="NF001368">
    <property type="entry name" value="PRK00277.1"/>
    <property type="match status" value="1"/>
</dbReference>
<dbReference type="NCBIfam" id="NF009205">
    <property type="entry name" value="PRK12553.1"/>
    <property type="match status" value="1"/>
</dbReference>
<dbReference type="PANTHER" id="PTHR10381">
    <property type="entry name" value="ATP-DEPENDENT CLP PROTEASE PROTEOLYTIC SUBUNIT"/>
    <property type="match status" value="1"/>
</dbReference>
<dbReference type="PANTHER" id="PTHR10381:SF70">
    <property type="entry name" value="ATP-DEPENDENT CLP PROTEASE PROTEOLYTIC SUBUNIT"/>
    <property type="match status" value="1"/>
</dbReference>
<dbReference type="Pfam" id="PF00574">
    <property type="entry name" value="CLP_protease"/>
    <property type="match status" value="1"/>
</dbReference>
<dbReference type="PRINTS" id="PR00127">
    <property type="entry name" value="CLPPROTEASEP"/>
</dbReference>
<dbReference type="SUPFAM" id="SSF52096">
    <property type="entry name" value="ClpP/crotonase"/>
    <property type="match status" value="1"/>
</dbReference>
<dbReference type="PROSITE" id="PS00382">
    <property type="entry name" value="CLP_PROTEASE_HIS"/>
    <property type="match status" value="1"/>
</dbReference>
<dbReference type="PROSITE" id="PS00381">
    <property type="entry name" value="CLP_PROTEASE_SER"/>
    <property type="match status" value="1"/>
</dbReference>
<protein>
    <recommendedName>
        <fullName evidence="1">ATP-dependent Clp protease proteolytic subunit 2</fullName>
        <ecNumber evidence="1">3.4.21.92</ecNumber>
    </recommendedName>
    <alternativeName>
        <fullName evidence="1">Endopeptidase Clp 2</fullName>
    </alternativeName>
</protein>
<proteinExistence type="inferred from homology"/>
<sequence length="203" mass="22080">MTLVPYVVEDTGRGERAMDIYSRLLKDRIVMIGQEITEPLANTVIAQLLFLMSEDPKKDIQIFINSPGGYITAGLAIYDTIRFLGCDVNTYCIGQAASMGALLLSAGTKGKRHALPHSRMMIHQPSGGIIGTSADIQLQAAEILTLKKHLANILSECTGQPVEKIIEDSERDFFMGAEEAISYGLIDKVVTSAKETNKDTSST</sequence>
<comment type="function">
    <text evidence="1">Cleaves peptides in various proteins in a process that requires ATP hydrolysis. Has a chymotrypsin-like activity. Plays a major role in the degradation of misfolded proteins.</text>
</comment>
<comment type="catalytic activity">
    <reaction evidence="1">
        <text>Hydrolysis of proteins to small peptides in the presence of ATP and magnesium. alpha-casein is the usual test substrate. In the absence of ATP, only oligopeptides shorter than five residues are hydrolyzed (such as succinyl-Leu-Tyr-|-NHMec, and Leu-Tyr-Leu-|-Tyr-Trp, in which cleavage of the -Tyr-|-Leu- and -Tyr-|-Trp bonds also occurs).</text>
        <dbReference type="EC" id="3.4.21.92"/>
    </reaction>
</comment>
<comment type="subunit">
    <text evidence="1">Fourteen ClpP subunits assemble into 2 heptameric rings which stack back to back to give a disk-like structure with a central cavity, resembling the structure of eukaryotic proteasomes.</text>
</comment>
<comment type="subcellular location">
    <subcellularLocation>
        <location evidence="1">Cytoplasm</location>
    </subcellularLocation>
</comment>
<comment type="similarity">
    <text evidence="1">Belongs to the peptidase S14 family.</text>
</comment>
<reference key="1">
    <citation type="journal article" date="1999" name="Nat. Genet.">
        <title>Comparative genomes of Chlamydia pneumoniae and C. trachomatis.</title>
        <authorList>
            <person name="Kalman S."/>
            <person name="Mitchell W.P."/>
            <person name="Marathe R."/>
            <person name="Lammel C.J."/>
            <person name="Fan J."/>
            <person name="Hyman R.W."/>
            <person name="Olinger L."/>
            <person name="Grimwood J."/>
            <person name="Davis R.W."/>
            <person name="Stephens R.S."/>
        </authorList>
    </citation>
    <scope>NUCLEOTIDE SEQUENCE [LARGE SCALE GENOMIC DNA]</scope>
    <source>
        <strain>CWL029</strain>
    </source>
</reference>
<reference key="2">
    <citation type="journal article" date="2000" name="Nucleic Acids Res.">
        <title>Genome sequences of Chlamydia trachomatis MoPn and Chlamydia pneumoniae AR39.</title>
        <authorList>
            <person name="Read T.D."/>
            <person name="Brunham R.C."/>
            <person name="Shen C."/>
            <person name="Gill S.R."/>
            <person name="Heidelberg J.F."/>
            <person name="White O."/>
            <person name="Hickey E.K."/>
            <person name="Peterson J.D."/>
            <person name="Utterback T.R."/>
            <person name="Berry K.J."/>
            <person name="Bass S."/>
            <person name="Linher K.D."/>
            <person name="Weidman J.F."/>
            <person name="Khouri H.M."/>
            <person name="Craven B."/>
            <person name="Bowman C."/>
            <person name="Dodson R.J."/>
            <person name="Gwinn M.L."/>
            <person name="Nelson W.C."/>
            <person name="DeBoy R.T."/>
            <person name="Kolonay J.F."/>
            <person name="McClarty G."/>
            <person name="Salzberg S.L."/>
            <person name="Eisen J.A."/>
            <person name="Fraser C.M."/>
        </authorList>
    </citation>
    <scope>NUCLEOTIDE SEQUENCE [LARGE SCALE GENOMIC DNA]</scope>
    <source>
        <strain>AR39</strain>
    </source>
</reference>
<reference key="3">
    <citation type="journal article" date="2000" name="Nucleic Acids Res.">
        <title>Comparison of whole genome sequences of Chlamydia pneumoniae J138 from Japan and CWL029 from USA.</title>
        <authorList>
            <person name="Shirai M."/>
            <person name="Hirakawa H."/>
            <person name="Kimoto M."/>
            <person name="Tabuchi M."/>
            <person name="Kishi F."/>
            <person name="Ouchi K."/>
            <person name="Shiba T."/>
            <person name="Ishii K."/>
            <person name="Hattori M."/>
            <person name="Kuhara S."/>
            <person name="Nakazawa T."/>
        </authorList>
    </citation>
    <scope>NUCLEOTIDE SEQUENCE [LARGE SCALE GENOMIC DNA]</scope>
    <source>
        <strain>J138</strain>
    </source>
</reference>
<reference key="4">
    <citation type="submission" date="2002-05" db="EMBL/GenBank/DDBJ databases">
        <title>The genome sequence of Chlamydia pneumoniae TW183 and comparison with other Chlamydia strains based on whole genome sequence analysis.</title>
        <authorList>
            <person name="Geng M.M."/>
            <person name="Schuhmacher A."/>
            <person name="Muehldorfer I."/>
            <person name="Bensch K.W."/>
            <person name="Schaefer K.P."/>
            <person name="Schneider S."/>
            <person name="Pohl T."/>
            <person name="Essig A."/>
            <person name="Marre R."/>
            <person name="Melchers K."/>
        </authorList>
    </citation>
    <scope>NUCLEOTIDE SEQUENCE [LARGE SCALE GENOMIC DNA]</scope>
    <source>
        <strain>TW-183</strain>
    </source>
</reference>
<accession>Q9Z759</accession>
<accession>Q9JQE3</accession>
<evidence type="ECO:0000255" key="1">
    <source>
        <dbReference type="HAMAP-Rule" id="MF_00444"/>
    </source>
</evidence>
<gene>
    <name evidence="1" type="primary">clpP2</name>
    <name type="ordered locus">CPn_0847</name>
    <name type="ordered locus">CP_1022</name>
    <name type="ordered locus">CpB0876</name>
</gene>